<sequence length="132" mass="14790">MDVTRLLLATLLVFLCFFTVYSHLPPEEKLRDDRSLRSNSSVNLLDFPSVSIVALNKKSKQISRKEAEKKRSSKKEASMKKVAQPRTPLSAPCVATRYSCKPPAPACCDPCASCQCRFFRSACSCRVLRLNC</sequence>
<accession>Q1XGU8</accession>
<accession>A1YL71</accession>
<keyword id="KW-1015">Disulfide bond</keyword>
<keyword id="KW-0325">Glycoprotein</keyword>
<keyword id="KW-0960">Knottin</keyword>
<keyword id="KW-0964">Secreted</keyword>
<keyword id="KW-0732">Signal</keyword>
<name>ASIP_SEMEN</name>
<feature type="signal peptide" evidence="4">
    <location>
        <begin position="1"/>
        <end position="22"/>
    </location>
</feature>
<feature type="chain" id="PRO_0000235201" description="Agouti-signaling protein">
    <location>
        <begin position="23"/>
        <end position="132"/>
    </location>
</feature>
<feature type="domain" description="Agouti" evidence="5">
    <location>
        <begin position="93"/>
        <end position="132"/>
    </location>
</feature>
<feature type="region of interest" description="Disordered" evidence="6">
    <location>
        <begin position="62"/>
        <end position="88"/>
    </location>
</feature>
<feature type="compositionally biased region" description="Basic and acidic residues" evidence="6">
    <location>
        <begin position="63"/>
        <end position="79"/>
    </location>
</feature>
<feature type="glycosylation site" description="N-linked (GlcNAc...) asparagine" evidence="4">
    <location>
        <position position="39"/>
    </location>
</feature>
<feature type="disulfide bond" evidence="5">
    <location>
        <begin position="93"/>
        <end position="108"/>
    </location>
</feature>
<feature type="disulfide bond" evidence="5">
    <location>
        <begin position="100"/>
        <end position="114"/>
    </location>
</feature>
<feature type="disulfide bond" evidence="5">
    <location>
        <begin position="107"/>
        <end position="125"/>
    </location>
</feature>
<feature type="disulfide bond" evidence="5">
    <location>
        <begin position="111"/>
        <end position="132"/>
    </location>
</feature>
<feature type="disulfide bond" evidence="5">
    <location>
        <begin position="116"/>
        <end position="123"/>
    </location>
</feature>
<reference key="1">
    <citation type="journal article" date="2006" name="Genome Res.">
        <title>Alu-mediated 100-kb deletion in the primate genome: the loss of the agouti signaling protein gene in the lesser apes.</title>
        <authorList>
            <person name="Nakayama K."/>
            <person name="Ishida T."/>
        </authorList>
    </citation>
    <scope>NUCLEOTIDE SEQUENCE [GENOMIC DNA]</scope>
</reference>
<reference key="2">
    <citation type="journal article" date="2006" name="Mamm. Genome">
        <title>Investigation of the role of the agouti signaling protein gene (ASIP) in coat color evolution in primates.</title>
        <authorList>
            <person name="Mundy N.I."/>
            <person name="Kelly J."/>
        </authorList>
    </citation>
    <scope>NUCLEOTIDE SEQUENCE [GENOMIC DNA]</scope>
</reference>
<gene>
    <name type="primary">ASIP</name>
</gene>
<dbReference type="EMBL" id="AB236878">
    <property type="protein sequence ID" value="BAE93026.1"/>
    <property type="molecule type" value="Genomic_DNA"/>
</dbReference>
<dbReference type="EMBL" id="EF094488">
    <property type="protein sequence ID" value="ABL84286.1"/>
    <property type="molecule type" value="Genomic_DNA"/>
</dbReference>
<dbReference type="GlyCosmos" id="Q1XGU8">
    <property type="glycosylation" value="1 site, No reported glycans"/>
</dbReference>
<dbReference type="GO" id="GO:0005615">
    <property type="term" value="C:extracellular space"/>
    <property type="evidence" value="ECO:0000250"/>
    <property type="project" value="UniProtKB"/>
</dbReference>
<dbReference type="GO" id="GO:0031779">
    <property type="term" value="F:melanocortin receptor binding"/>
    <property type="evidence" value="ECO:0007669"/>
    <property type="project" value="TreeGrafter"/>
</dbReference>
<dbReference type="GO" id="GO:0005184">
    <property type="term" value="F:neuropeptide hormone activity"/>
    <property type="evidence" value="ECO:0007669"/>
    <property type="project" value="TreeGrafter"/>
</dbReference>
<dbReference type="GO" id="GO:0009755">
    <property type="term" value="P:hormone-mediated signaling pathway"/>
    <property type="evidence" value="ECO:0007669"/>
    <property type="project" value="InterPro"/>
</dbReference>
<dbReference type="GO" id="GO:0042438">
    <property type="term" value="P:melanin biosynthetic process"/>
    <property type="evidence" value="ECO:0000250"/>
    <property type="project" value="UniProtKB"/>
</dbReference>
<dbReference type="GO" id="GO:0032438">
    <property type="term" value="P:melanosome organization"/>
    <property type="evidence" value="ECO:0007669"/>
    <property type="project" value="TreeGrafter"/>
</dbReference>
<dbReference type="FunFam" id="4.10.760.10:FF:000002">
    <property type="entry name" value="Agouti-signaling protein"/>
    <property type="match status" value="1"/>
</dbReference>
<dbReference type="Gene3D" id="4.10.760.10">
    <property type="entry name" value="Agouti domain"/>
    <property type="match status" value="1"/>
</dbReference>
<dbReference type="InterPro" id="IPR007733">
    <property type="entry name" value="Agouti"/>
</dbReference>
<dbReference type="InterPro" id="IPR027300">
    <property type="entry name" value="Agouti_dom"/>
</dbReference>
<dbReference type="InterPro" id="IPR036836">
    <property type="entry name" value="Agouti_dom_sf"/>
</dbReference>
<dbReference type="PANTHER" id="PTHR16551">
    <property type="entry name" value="AGOUTI RELATED"/>
    <property type="match status" value="1"/>
</dbReference>
<dbReference type="PANTHER" id="PTHR16551:SF1">
    <property type="entry name" value="AGOUTI-SIGNALING PROTEIN"/>
    <property type="match status" value="1"/>
</dbReference>
<dbReference type="Pfam" id="PF05039">
    <property type="entry name" value="Agouti"/>
    <property type="match status" value="1"/>
</dbReference>
<dbReference type="SMART" id="SM00792">
    <property type="entry name" value="Agouti"/>
    <property type="match status" value="1"/>
</dbReference>
<dbReference type="SUPFAM" id="SSF57055">
    <property type="entry name" value="Agouti-related protein"/>
    <property type="match status" value="1"/>
</dbReference>
<dbReference type="PROSITE" id="PS60024">
    <property type="entry name" value="AGOUTI_1"/>
    <property type="match status" value="1"/>
</dbReference>
<dbReference type="PROSITE" id="PS51150">
    <property type="entry name" value="AGOUTI_2"/>
    <property type="match status" value="1"/>
</dbReference>
<protein>
    <recommendedName>
        <fullName>Agouti-signaling protein</fullName>
        <shortName>ASP</shortName>
    </recommendedName>
    <alternativeName>
        <fullName>Agouti switch protein</fullName>
    </alternativeName>
</protein>
<comment type="function">
    <text evidence="3">Involved in the regulation of melanogenesis. The binding of ASP to MC1R precludes alpha-MSH initiated signaling and thus blocks production of cAMP, leading to a down-regulation of eumelanogenesis (brown/black pigment) and thus increasing synthesis of pheomelanin (yellow/red pigment) (By similarity).</text>
</comment>
<comment type="subcellular location">
    <subcellularLocation>
        <location evidence="2">Secreted</location>
    </subcellularLocation>
</comment>
<comment type="domain">
    <text evidence="1">The presence of a 'disulfide through disulfide knot' structurally defines this protein as a knottin.</text>
</comment>
<evidence type="ECO:0000250" key="1"/>
<evidence type="ECO:0000250" key="2">
    <source>
        <dbReference type="UniProtKB" id="P42127"/>
    </source>
</evidence>
<evidence type="ECO:0000250" key="3">
    <source>
        <dbReference type="UniProtKB" id="Q03288"/>
    </source>
</evidence>
<evidence type="ECO:0000255" key="4"/>
<evidence type="ECO:0000255" key="5">
    <source>
        <dbReference type="PROSITE-ProRule" id="PRU00494"/>
    </source>
</evidence>
<evidence type="ECO:0000256" key="6">
    <source>
        <dbReference type="SAM" id="MobiDB-lite"/>
    </source>
</evidence>
<organism>
    <name type="scientific">Semnopithecus entellus</name>
    <name type="common">Northern plains gray langur</name>
    <name type="synonym">Presbytis entellus</name>
    <dbReference type="NCBI Taxonomy" id="88029"/>
    <lineage>
        <taxon>Eukaryota</taxon>
        <taxon>Metazoa</taxon>
        <taxon>Chordata</taxon>
        <taxon>Craniata</taxon>
        <taxon>Vertebrata</taxon>
        <taxon>Euteleostomi</taxon>
        <taxon>Mammalia</taxon>
        <taxon>Eutheria</taxon>
        <taxon>Euarchontoglires</taxon>
        <taxon>Primates</taxon>
        <taxon>Haplorrhini</taxon>
        <taxon>Catarrhini</taxon>
        <taxon>Cercopithecidae</taxon>
        <taxon>Colobinae</taxon>
        <taxon>Semnopithecus</taxon>
    </lineage>
</organism>
<proteinExistence type="inferred from homology"/>